<feature type="chain" id="PRO_1000145753" description="Iron-binding protein IscA">
    <location>
        <begin position="1"/>
        <end position="107"/>
    </location>
</feature>
<feature type="binding site" evidence="1">
    <location>
        <position position="35"/>
    </location>
    <ligand>
        <name>Fe cation</name>
        <dbReference type="ChEBI" id="CHEBI:24875"/>
    </ligand>
</feature>
<feature type="binding site" evidence="1">
    <location>
        <position position="99"/>
    </location>
    <ligand>
        <name>Fe cation</name>
        <dbReference type="ChEBI" id="CHEBI:24875"/>
    </ligand>
</feature>
<feature type="binding site" evidence="1">
    <location>
        <position position="101"/>
    </location>
    <ligand>
        <name>Fe cation</name>
        <dbReference type="ChEBI" id="CHEBI:24875"/>
    </ligand>
</feature>
<organism>
    <name type="scientific">Escherichia coli O17:K52:H18 (strain UMN026 / ExPEC)</name>
    <dbReference type="NCBI Taxonomy" id="585056"/>
    <lineage>
        <taxon>Bacteria</taxon>
        <taxon>Pseudomonadati</taxon>
        <taxon>Pseudomonadota</taxon>
        <taxon>Gammaproteobacteria</taxon>
        <taxon>Enterobacterales</taxon>
        <taxon>Enterobacteriaceae</taxon>
        <taxon>Escherichia</taxon>
    </lineage>
</organism>
<comment type="function">
    <text evidence="1">Is able to transfer iron-sulfur clusters to apo-ferredoxin. Multiple cycles of [2Fe2S] cluster formation and transfer are observed, suggesting that IscA acts catalytically. Recruits intracellular free iron so as to provide iron for the assembly of transient iron-sulfur cluster in IscU in the presence of IscS, L-cysteine and the thioredoxin reductase system TrxA/TrxB.</text>
</comment>
<comment type="cofactor">
    <cofactor evidence="1">
        <name>Fe cation</name>
        <dbReference type="ChEBI" id="CHEBI:24875"/>
    </cofactor>
    <text evidence="1">Binds 2 iron ions per dimer. The dimer may bind additional iron ions.</text>
</comment>
<comment type="subunit">
    <text evidence="1">Homodimer; may form tetramers and higher multimers.</text>
</comment>
<comment type="similarity">
    <text evidence="1">Belongs to the HesB/IscA family.</text>
</comment>
<dbReference type="EMBL" id="CU928163">
    <property type="protein sequence ID" value="CAR14024.1"/>
    <property type="molecule type" value="Genomic_DNA"/>
</dbReference>
<dbReference type="RefSeq" id="WP_000028953.1">
    <property type="nucleotide sequence ID" value="NC_011751.1"/>
</dbReference>
<dbReference type="RefSeq" id="YP_002413550.1">
    <property type="nucleotide sequence ID" value="NC_011751.1"/>
</dbReference>
<dbReference type="SMR" id="B7N6B5"/>
<dbReference type="STRING" id="585056.ECUMN_2848"/>
<dbReference type="GeneID" id="93774608"/>
<dbReference type="KEGG" id="eum:ECUMN_2848"/>
<dbReference type="PATRIC" id="fig|585056.7.peg.3035"/>
<dbReference type="HOGENOM" id="CLU_069054_5_1_6"/>
<dbReference type="Proteomes" id="UP000007097">
    <property type="component" value="Chromosome"/>
</dbReference>
<dbReference type="GO" id="GO:0005829">
    <property type="term" value="C:cytosol"/>
    <property type="evidence" value="ECO:0007669"/>
    <property type="project" value="TreeGrafter"/>
</dbReference>
<dbReference type="GO" id="GO:0051537">
    <property type="term" value="F:2 iron, 2 sulfur cluster binding"/>
    <property type="evidence" value="ECO:0007669"/>
    <property type="project" value="UniProtKB-ARBA"/>
</dbReference>
<dbReference type="GO" id="GO:0005506">
    <property type="term" value="F:iron ion binding"/>
    <property type="evidence" value="ECO:0007669"/>
    <property type="project" value="UniProtKB-UniRule"/>
</dbReference>
<dbReference type="GO" id="GO:0016226">
    <property type="term" value="P:iron-sulfur cluster assembly"/>
    <property type="evidence" value="ECO:0007669"/>
    <property type="project" value="UniProtKB-UniRule"/>
</dbReference>
<dbReference type="FunFam" id="2.60.300.12:FF:000001">
    <property type="entry name" value="Iron-binding protein IscA"/>
    <property type="match status" value="1"/>
</dbReference>
<dbReference type="Gene3D" id="2.60.300.12">
    <property type="entry name" value="HesB-like domain"/>
    <property type="match status" value="1"/>
</dbReference>
<dbReference type="HAMAP" id="MF_01429">
    <property type="entry name" value="Fe_S_insert_IscA"/>
    <property type="match status" value="1"/>
</dbReference>
<dbReference type="InterPro" id="IPR050322">
    <property type="entry name" value="Fe-S_cluster_asmbl/transfer"/>
</dbReference>
<dbReference type="InterPro" id="IPR000361">
    <property type="entry name" value="FeS_biogenesis"/>
</dbReference>
<dbReference type="InterPro" id="IPR016092">
    <property type="entry name" value="FeS_cluster_insertion"/>
</dbReference>
<dbReference type="InterPro" id="IPR017870">
    <property type="entry name" value="FeS_cluster_insertion_CS"/>
</dbReference>
<dbReference type="InterPro" id="IPR035903">
    <property type="entry name" value="HesB-like_dom_sf"/>
</dbReference>
<dbReference type="InterPro" id="IPR011302">
    <property type="entry name" value="IscA_proteobacteria"/>
</dbReference>
<dbReference type="NCBIfam" id="TIGR00049">
    <property type="entry name" value="iron-sulfur cluster assembly accessory protein"/>
    <property type="match status" value="1"/>
</dbReference>
<dbReference type="NCBIfam" id="TIGR02011">
    <property type="entry name" value="IscA"/>
    <property type="match status" value="1"/>
</dbReference>
<dbReference type="NCBIfam" id="NF007049">
    <property type="entry name" value="PRK09502.1"/>
    <property type="match status" value="1"/>
</dbReference>
<dbReference type="PANTHER" id="PTHR10072:SF41">
    <property type="entry name" value="IRON-SULFUR CLUSTER ASSEMBLY 1 HOMOLOG, MITOCHONDRIAL"/>
    <property type="match status" value="1"/>
</dbReference>
<dbReference type="PANTHER" id="PTHR10072">
    <property type="entry name" value="IRON-SULFUR CLUSTER ASSEMBLY PROTEIN"/>
    <property type="match status" value="1"/>
</dbReference>
<dbReference type="Pfam" id="PF01521">
    <property type="entry name" value="Fe-S_biosyn"/>
    <property type="match status" value="1"/>
</dbReference>
<dbReference type="SUPFAM" id="SSF89360">
    <property type="entry name" value="HesB-like domain"/>
    <property type="match status" value="1"/>
</dbReference>
<dbReference type="PROSITE" id="PS01152">
    <property type="entry name" value="HESB"/>
    <property type="match status" value="1"/>
</dbReference>
<accession>B7N6B5</accession>
<proteinExistence type="inferred from homology"/>
<evidence type="ECO:0000255" key="1">
    <source>
        <dbReference type="HAMAP-Rule" id="MF_01429"/>
    </source>
</evidence>
<gene>
    <name evidence="1" type="primary">iscA</name>
    <name type="ordered locus">ECUMN_2848</name>
</gene>
<name>ISCA_ECOLU</name>
<keyword id="KW-0408">Iron</keyword>
<keyword id="KW-0479">Metal-binding</keyword>
<protein>
    <recommendedName>
        <fullName evidence="1">Iron-binding protein IscA</fullName>
    </recommendedName>
    <alternativeName>
        <fullName evidence="1">Iron-sulfur cluster assembly protein</fullName>
    </alternativeName>
</protein>
<reference key="1">
    <citation type="journal article" date="2009" name="PLoS Genet.">
        <title>Organised genome dynamics in the Escherichia coli species results in highly diverse adaptive paths.</title>
        <authorList>
            <person name="Touchon M."/>
            <person name="Hoede C."/>
            <person name="Tenaillon O."/>
            <person name="Barbe V."/>
            <person name="Baeriswyl S."/>
            <person name="Bidet P."/>
            <person name="Bingen E."/>
            <person name="Bonacorsi S."/>
            <person name="Bouchier C."/>
            <person name="Bouvet O."/>
            <person name="Calteau A."/>
            <person name="Chiapello H."/>
            <person name="Clermont O."/>
            <person name="Cruveiller S."/>
            <person name="Danchin A."/>
            <person name="Diard M."/>
            <person name="Dossat C."/>
            <person name="Karoui M.E."/>
            <person name="Frapy E."/>
            <person name="Garry L."/>
            <person name="Ghigo J.M."/>
            <person name="Gilles A.M."/>
            <person name="Johnson J."/>
            <person name="Le Bouguenec C."/>
            <person name="Lescat M."/>
            <person name="Mangenot S."/>
            <person name="Martinez-Jehanne V."/>
            <person name="Matic I."/>
            <person name="Nassif X."/>
            <person name="Oztas S."/>
            <person name="Petit M.A."/>
            <person name="Pichon C."/>
            <person name="Rouy Z."/>
            <person name="Ruf C.S."/>
            <person name="Schneider D."/>
            <person name="Tourret J."/>
            <person name="Vacherie B."/>
            <person name="Vallenet D."/>
            <person name="Medigue C."/>
            <person name="Rocha E.P.C."/>
            <person name="Denamur E."/>
        </authorList>
    </citation>
    <scope>NUCLEOTIDE SEQUENCE [LARGE SCALE GENOMIC DNA]</scope>
    <source>
        <strain>UMN026 / ExPEC</strain>
    </source>
</reference>
<sequence length="107" mass="11556">MSITLSDSAAARVNTFLANRGKGFGLRLGVRTSGCSGMAYVLEFVDEPTPEDIVFEDKGVKVVVDGKSLQFLDGTQLDFVKEGLNEGFKFTNPNVKDECGCGESFHV</sequence>